<evidence type="ECO:0000255" key="1">
    <source>
        <dbReference type="HAMAP-Rule" id="MF_00739"/>
    </source>
</evidence>
<keyword id="KW-0963">Cytoplasm</keyword>
<keyword id="KW-0378">Hydrolase</keyword>
<sequence>MHFTQREQDKLMIVVAAEVARRRKARGLKLNHPEALALISDELLEGARDGKTVAELMSYGRQILNKEDVMDGVEHMITDIEIEATFPDGTKLITVHHPIV</sequence>
<dbReference type="EC" id="3.5.1.5" evidence="1"/>
<dbReference type="EMBL" id="CP000730">
    <property type="protein sequence ID" value="ABX30262.1"/>
    <property type="molecule type" value="Genomic_DNA"/>
</dbReference>
<dbReference type="RefSeq" id="WP_000545928.1">
    <property type="nucleotide sequence ID" value="NC_010079.1"/>
</dbReference>
<dbReference type="SMR" id="A8Z385"/>
<dbReference type="KEGG" id="sax:USA300HOU_2269"/>
<dbReference type="HOGENOM" id="CLU_145825_1_0_9"/>
<dbReference type="UniPathway" id="UPA00258">
    <property type="reaction ID" value="UER00370"/>
</dbReference>
<dbReference type="GO" id="GO:0005737">
    <property type="term" value="C:cytoplasm"/>
    <property type="evidence" value="ECO:0007669"/>
    <property type="project" value="UniProtKB-SubCell"/>
</dbReference>
<dbReference type="GO" id="GO:0016151">
    <property type="term" value="F:nickel cation binding"/>
    <property type="evidence" value="ECO:0007669"/>
    <property type="project" value="InterPro"/>
</dbReference>
<dbReference type="GO" id="GO:0009039">
    <property type="term" value="F:urease activity"/>
    <property type="evidence" value="ECO:0007669"/>
    <property type="project" value="UniProtKB-UniRule"/>
</dbReference>
<dbReference type="GO" id="GO:0043419">
    <property type="term" value="P:urea catabolic process"/>
    <property type="evidence" value="ECO:0007669"/>
    <property type="project" value="UniProtKB-UniRule"/>
</dbReference>
<dbReference type="CDD" id="cd00390">
    <property type="entry name" value="Urease_gamma"/>
    <property type="match status" value="1"/>
</dbReference>
<dbReference type="Gene3D" id="3.30.280.10">
    <property type="entry name" value="Urease, gamma-like subunit"/>
    <property type="match status" value="1"/>
</dbReference>
<dbReference type="HAMAP" id="MF_00739">
    <property type="entry name" value="Urease_gamma"/>
    <property type="match status" value="1"/>
</dbReference>
<dbReference type="InterPro" id="IPR012010">
    <property type="entry name" value="Urease_gamma"/>
</dbReference>
<dbReference type="InterPro" id="IPR002026">
    <property type="entry name" value="Urease_gamma/gamma-beta_su"/>
</dbReference>
<dbReference type="InterPro" id="IPR036463">
    <property type="entry name" value="Urease_gamma_sf"/>
</dbReference>
<dbReference type="InterPro" id="IPR050069">
    <property type="entry name" value="Urease_subunit"/>
</dbReference>
<dbReference type="NCBIfam" id="NF009712">
    <property type="entry name" value="PRK13241.1"/>
    <property type="match status" value="1"/>
</dbReference>
<dbReference type="NCBIfam" id="TIGR00193">
    <property type="entry name" value="urease_gam"/>
    <property type="match status" value="1"/>
</dbReference>
<dbReference type="PANTHER" id="PTHR33569">
    <property type="entry name" value="UREASE"/>
    <property type="match status" value="1"/>
</dbReference>
<dbReference type="PANTHER" id="PTHR33569:SF1">
    <property type="entry name" value="UREASE"/>
    <property type="match status" value="1"/>
</dbReference>
<dbReference type="Pfam" id="PF00547">
    <property type="entry name" value="Urease_gamma"/>
    <property type="match status" value="1"/>
</dbReference>
<dbReference type="PIRSF" id="PIRSF001223">
    <property type="entry name" value="Urease_gamma"/>
    <property type="match status" value="1"/>
</dbReference>
<dbReference type="SUPFAM" id="SSF54111">
    <property type="entry name" value="Urease, gamma-subunit"/>
    <property type="match status" value="1"/>
</dbReference>
<organism>
    <name type="scientific">Staphylococcus aureus (strain USA300 / TCH1516)</name>
    <dbReference type="NCBI Taxonomy" id="451516"/>
    <lineage>
        <taxon>Bacteria</taxon>
        <taxon>Bacillati</taxon>
        <taxon>Bacillota</taxon>
        <taxon>Bacilli</taxon>
        <taxon>Bacillales</taxon>
        <taxon>Staphylococcaceae</taxon>
        <taxon>Staphylococcus</taxon>
    </lineage>
</organism>
<protein>
    <recommendedName>
        <fullName evidence="1">Urease subunit gamma</fullName>
        <ecNumber evidence="1">3.5.1.5</ecNumber>
    </recommendedName>
    <alternativeName>
        <fullName evidence="1">Urea amidohydrolase subunit gamma</fullName>
    </alternativeName>
</protein>
<comment type="catalytic activity">
    <reaction evidence="1">
        <text>urea + 2 H2O + H(+) = hydrogencarbonate + 2 NH4(+)</text>
        <dbReference type="Rhea" id="RHEA:20557"/>
        <dbReference type="ChEBI" id="CHEBI:15377"/>
        <dbReference type="ChEBI" id="CHEBI:15378"/>
        <dbReference type="ChEBI" id="CHEBI:16199"/>
        <dbReference type="ChEBI" id="CHEBI:17544"/>
        <dbReference type="ChEBI" id="CHEBI:28938"/>
        <dbReference type="EC" id="3.5.1.5"/>
    </reaction>
</comment>
<comment type="pathway">
    <text evidence="1">Nitrogen metabolism; urea degradation; CO(2) and NH(3) from urea (urease route): step 1/1.</text>
</comment>
<comment type="subunit">
    <text evidence="1">Heterotrimer of UreA (gamma), UreB (beta) and UreC (alpha) subunits. Three heterotrimers associate to form the active enzyme.</text>
</comment>
<comment type="subcellular location">
    <subcellularLocation>
        <location evidence="1">Cytoplasm</location>
    </subcellularLocation>
</comment>
<comment type="similarity">
    <text evidence="1">Belongs to the urease gamma subunit family.</text>
</comment>
<reference key="1">
    <citation type="journal article" date="2007" name="BMC Microbiol.">
        <title>Subtle genetic changes enhance virulence of methicillin resistant and sensitive Staphylococcus aureus.</title>
        <authorList>
            <person name="Highlander S.K."/>
            <person name="Hulten K.G."/>
            <person name="Qin X."/>
            <person name="Jiang H."/>
            <person name="Yerrapragada S."/>
            <person name="Mason E.O. Jr."/>
            <person name="Shang Y."/>
            <person name="Williams T.M."/>
            <person name="Fortunov R.M."/>
            <person name="Liu Y."/>
            <person name="Igboeli O."/>
            <person name="Petrosino J."/>
            <person name="Tirumalai M."/>
            <person name="Uzman A."/>
            <person name="Fox G.E."/>
            <person name="Cardenas A.M."/>
            <person name="Muzny D.M."/>
            <person name="Hemphill L."/>
            <person name="Ding Y."/>
            <person name="Dugan S."/>
            <person name="Blyth P.R."/>
            <person name="Buhay C.J."/>
            <person name="Dinh H.H."/>
            <person name="Hawes A.C."/>
            <person name="Holder M."/>
            <person name="Kovar C.L."/>
            <person name="Lee S.L."/>
            <person name="Liu W."/>
            <person name="Nazareth L.V."/>
            <person name="Wang Q."/>
            <person name="Zhou J."/>
            <person name="Kaplan S.L."/>
            <person name="Weinstock G.M."/>
        </authorList>
    </citation>
    <scope>NUCLEOTIDE SEQUENCE [LARGE SCALE GENOMIC DNA]</scope>
    <source>
        <strain>USA300 / TCH1516</strain>
    </source>
</reference>
<name>URE3_STAAT</name>
<gene>
    <name evidence="1" type="primary">ureA</name>
    <name type="ordered locus">USA300HOU_2269</name>
</gene>
<accession>A8Z385</accession>
<proteinExistence type="inferred from homology"/>
<feature type="chain" id="PRO_1000083431" description="Urease subunit gamma">
    <location>
        <begin position="1"/>
        <end position="100"/>
    </location>
</feature>